<proteinExistence type="inferred from homology"/>
<geneLocation type="chloroplast"/>
<dbReference type="EMBL" id="DQ898156">
    <property type="protein sequence ID" value="ABI32464.1"/>
    <property type="molecule type" value="Genomic_DNA"/>
</dbReference>
<dbReference type="RefSeq" id="YP_740158.1">
    <property type="nucleotide sequence ID" value="NC_008325.1"/>
</dbReference>
<dbReference type="SMR" id="Q0G9S1"/>
<dbReference type="GeneID" id="4266785"/>
<dbReference type="GO" id="GO:0009507">
    <property type="term" value="C:chloroplast"/>
    <property type="evidence" value="ECO:0007669"/>
    <property type="project" value="UniProtKB-SubCell"/>
</dbReference>
<dbReference type="GO" id="GO:0005763">
    <property type="term" value="C:mitochondrial small ribosomal subunit"/>
    <property type="evidence" value="ECO:0007669"/>
    <property type="project" value="TreeGrafter"/>
</dbReference>
<dbReference type="GO" id="GO:0019843">
    <property type="term" value="F:rRNA binding"/>
    <property type="evidence" value="ECO:0007669"/>
    <property type="project" value="UniProtKB-UniRule"/>
</dbReference>
<dbReference type="GO" id="GO:0003735">
    <property type="term" value="F:structural constituent of ribosome"/>
    <property type="evidence" value="ECO:0007669"/>
    <property type="project" value="InterPro"/>
</dbReference>
<dbReference type="GO" id="GO:0000028">
    <property type="term" value="P:ribosomal small subunit assembly"/>
    <property type="evidence" value="ECO:0007669"/>
    <property type="project" value="TreeGrafter"/>
</dbReference>
<dbReference type="GO" id="GO:0006412">
    <property type="term" value="P:translation"/>
    <property type="evidence" value="ECO:0007669"/>
    <property type="project" value="UniProtKB-UniRule"/>
</dbReference>
<dbReference type="FunFam" id="3.30.860.10:FF:000001">
    <property type="entry name" value="30S ribosomal protein S19"/>
    <property type="match status" value="1"/>
</dbReference>
<dbReference type="Gene3D" id="3.30.860.10">
    <property type="entry name" value="30s Ribosomal Protein S19, Chain A"/>
    <property type="match status" value="1"/>
</dbReference>
<dbReference type="HAMAP" id="MF_00531">
    <property type="entry name" value="Ribosomal_uS19"/>
    <property type="match status" value="1"/>
</dbReference>
<dbReference type="InterPro" id="IPR002222">
    <property type="entry name" value="Ribosomal_uS19"/>
</dbReference>
<dbReference type="InterPro" id="IPR005732">
    <property type="entry name" value="Ribosomal_uS19_bac-type"/>
</dbReference>
<dbReference type="InterPro" id="IPR020934">
    <property type="entry name" value="Ribosomal_uS19_CS"/>
</dbReference>
<dbReference type="InterPro" id="IPR023575">
    <property type="entry name" value="Ribosomal_uS19_SF"/>
</dbReference>
<dbReference type="NCBIfam" id="TIGR01050">
    <property type="entry name" value="rpsS_bact"/>
    <property type="match status" value="1"/>
</dbReference>
<dbReference type="PANTHER" id="PTHR11880">
    <property type="entry name" value="RIBOSOMAL PROTEIN S19P FAMILY MEMBER"/>
    <property type="match status" value="1"/>
</dbReference>
<dbReference type="PANTHER" id="PTHR11880:SF8">
    <property type="entry name" value="SMALL RIBOSOMAL SUBUNIT PROTEIN US19M"/>
    <property type="match status" value="1"/>
</dbReference>
<dbReference type="Pfam" id="PF00203">
    <property type="entry name" value="Ribosomal_S19"/>
    <property type="match status" value="1"/>
</dbReference>
<dbReference type="PIRSF" id="PIRSF002144">
    <property type="entry name" value="Ribosomal_S19"/>
    <property type="match status" value="1"/>
</dbReference>
<dbReference type="PRINTS" id="PR00975">
    <property type="entry name" value="RIBOSOMALS19"/>
</dbReference>
<dbReference type="SUPFAM" id="SSF54570">
    <property type="entry name" value="Ribosomal protein S19"/>
    <property type="match status" value="1"/>
</dbReference>
<dbReference type="PROSITE" id="PS00323">
    <property type="entry name" value="RIBOSOMAL_S19"/>
    <property type="match status" value="1"/>
</dbReference>
<protein>
    <recommendedName>
        <fullName evidence="1">Small ribosomal subunit protein uS19c</fullName>
    </recommendedName>
    <alternativeName>
        <fullName evidence="2">30S ribosomal protein S19, chloroplastic</fullName>
    </alternativeName>
</protein>
<comment type="function">
    <text evidence="1">Protein S19 forms a complex with S13 that binds strongly to the 16S ribosomal RNA.</text>
</comment>
<comment type="subcellular location">
    <subcellularLocation>
        <location>Plastid</location>
        <location>Chloroplast</location>
    </subcellularLocation>
</comment>
<comment type="similarity">
    <text evidence="1">Belongs to the universal ribosomal protein uS19 family.</text>
</comment>
<evidence type="ECO:0000255" key="1">
    <source>
        <dbReference type="HAMAP-Rule" id="MF_00531"/>
    </source>
</evidence>
<evidence type="ECO:0000305" key="2"/>
<organism>
    <name type="scientific">Daucus carota</name>
    <name type="common">Wild carrot</name>
    <dbReference type="NCBI Taxonomy" id="4039"/>
    <lineage>
        <taxon>Eukaryota</taxon>
        <taxon>Viridiplantae</taxon>
        <taxon>Streptophyta</taxon>
        <taxon>Embryophyta</taxon>
        <taxon>Tracheophyta</taxon>
        <taxon>Spermatophyta</taxon>
        <taxon>Magnoliopsida</taxon>
        <taxon>eudicotyledons</taxon>
        <taxon>Gunneridae</taxon>
        <taxon>Pentapetalae</taxon>
        <taxon>asterids</taxon>
        <taxon>campanulids</taxon>
        <taxon>Apiales</taxon>
        <taxon>Apiaceae</taxon>
        <taxon>Apioideae</taxon>
        <taxon>Scandiceae</taxon>
        <taxon>Daucinae</taxon>
        <taxon>Daucus</taxon>
        <taxon>Daucus sect. Daucus</taxon>
    </lineage>
</organism>
<name>RR19_DAUCA</name>
<gene>
    <name evidence="1" type="primary">rps19</name>
</gene>
<keyword id="KW-0150">Chloroplast</keyword>
<keyword id="KW-0934">Plastid</keyword>
<keyword id="KW-0687">Ribonucleoprotein</keyword>
<keyword id="KW-0689">Ribosomal protein</keyword>
<keyword id="KW-0694">RNA-binding</keyword>
<keyword id="KW-0699">rRNA-binding</keyword>
<sequence length="92" mass="10559">MTRSLKKNPFVANRLLRKIDNLNTKAEKEIIITWSRASTIIPTMIGHTIAIHNGKEHLPIYITDRMVGHKLGEFAPTLNFRGHAKSDNRSRR</sequence>
<feature type="chain" id="PRO_0000276904" description="Small ribosomal subunit protein uS19c">
    <location>
        <begin position="1"/>
        <end position="92"/>
    </location>
</feature>
<reference key="1">
    <citation type="journal article" date="2006" name="BMC Genomics">
        <title>Complete plastid genome sequence of Daucus carota: implications for biotechnology and phylogeny of angiosperms.</title>
        <authorList>
            <person name="Ruhlman T."/>
            <person name="Lee S.-B."/>
            <person name="Jansen R.K."/>
            <person name="Hostetler J.B."/>
            <person name="Tallon L.J."/>
            <person name="Town C.D."/>
            <person name="Daniell H."/>
        </authorList>
    </citation>
    <scope>NUCLEOTIDE SEQUENCE [LARGE SCALE GENOMIC DNA]</scope>
    <source>
        <strain>cv. Danvers Half-long</strain>
    </source>
</reference>
<accession>Q0G9S1</accession>